<proteinExistence type="inferred from homology"/>
<evidence type="ECO:0000255" key="1">
    <source>
        <dbReference type="HAMAP-Rule" id="MF_01302"/>
    </source>
</evidence>
<evidence type="ECO:0000305" key="2"/>
<sequence>MMNDIIADALTRIRNAAMRRLEVATLLHSNTVVGVLNVLLQKEYIAGFKVIDGQNNKKTIQVELKYDDNEKSVINEITRVSKPGRRVYKSASEIKNFKNGYGTIIVSTNKGVIANDEAYAANVGGEVLCTVW</sequence>
<comment type="function">
    <text evidence="1">One of the primary rRNA binding proteins, it binds directly to 16S rRNA central domain where it helps coordinate assembly of the platform of the 30S subunit.</text>
</comment>
<comment type="subunit">
    <text evidence="1">Part of the 30S ribosomal subunit. Contacts proteins S5 and S12.</text>
</comment>
<comment type="similarity">
    <text evidence="1">Belongs to the universal ribosomal protein uS8 family.</text>
</comment>
<gene>
    <name evidence="1" type="primary">rpsH</name>
    <name type="ordered locus">Abu_0766</name>
</gene>
<keyword id="KW-1185">Reference proteome</keyword>
<keyword id="KW-0687">Ribonucleoprotein</keyword>
<keyword id="KW-0689">Ribosomal protein</keyword>
<keyword id="KW-0694">RNA-binding</keyword>
<keyword id="KW-0699">rRNA-binding</keyword>
<protein>
    <recommendedName>
        <fullName evidence="1">Small ribosomal subunit protein uS8</fullName>
    </recommendedName>
    <alternativeName>
        <fullName evidence="2">30S ribosomal protein S8</fullName>
    </alternativeName>
</protein>
<feature type="chain" id="PRO_1000067483" description="Small ribosomal subunit protein uS8">
    <location>
        <begin position="1"/>
        <end position="132"/>
    </location>
</feature>
<organism>
    <name type="scientific">Aliarcobacter butzleri (strain RM4018)</name>
    <name type="common">Arcobacter butzleri</name>
    <dbReference type="NCBI Taxonomy" id="367737"/>
    <lineage>
        <taxon>Bacteria</taxon>
        <taxon>Pseudomonadati</taxon>
        <taxon>Campylobacterota</taxon>
        <taxon>Epsilonproteobacteria</taxon>
        <taxon>Campylobacterales</taxon>
        <taxon>Arcobacteraceae</taxon>
        <taxon>Aliarcobacter</taxon>
    </lineage>
</organism>
<name>RS8_ALIB4</name>
<dbReference type="EMBL" id="CP000361">
    <property type="protein sequence ID" value="ABV67031.1"/>
    <property type="molecule type" value="Genomic_DNA"/>
</dbReference>
<dbReference type="RefSeq" id="WP_004510834.1">
    <property type="nucleotide sequence ID" value="NC_009850.1"/>
</dbReference>
<dbReference type="SMR" id="A8ESV7"/>
<dbReference type="STRING" id="367737.Abu_0766"/>
<dbReference type="GeneID" id="24304514"/>
<dbReference type="KEGG" id="abu:Abu_0766"/>
<dbReference type="eggNOG" id="COG0096">
    <property type="taxonomic scope" value="Bacteria"/>
</dbReference>
<dbReference type="HOGENOM" id="CLU_098428_0_2_7"/>
<dbReference type="Proteomes" id="UP000001136">
    <property type="component" value="Chromosome"/>
</dbReference>
<dbReference type="GO" id="GO:1990904">
    <property type="term" value="C:ribonucleoprotein complex"/>
    <property type="evidence" value="ECO:0007669"/>
    <property type="project" value="UniProtKB-KW"/>
</dbReference>
<dbReference type="GO" id="GO:0005840">
    <property type="term" value="C:ribosome"/>
    <property type="evidence" value="ECO:0007669"/>
    <property type="project" value="UniProtKB-KW"/>
</dbReference>
<dbReference type="GO" id="GO:0019843">
    <property type="term" value="F:rRNA binding"/>
    <property type="evidence" value="ECO:0007669"/>
    <property type="project" value="UniProtKB-UniRule"/>
</dbReference>
<dbReference type="GO" id="GO:0003735">
    <property type="term" value="F:structural constituent of ribosome"/>
    <property type="evidence" value="ECO:0007669"/>
    <property type="project" value="InterPro"/>
</dbReference>
<dbReference type="GO" id="GO:0006412">
    <property type="term" value="P:translation"/>
    <property type="evidence" value="ECO:0007669"/>
    <property type="project" value="UniProtKB-UniRule"/>
</dbReference>
<dbReference type="FunFam" id="3.30.1490.10:FF:000001">
    <property type="entry name" value="30S ribosomal protein S8"/>
    <property type="match status" value="1"/>
</dbReference>
<dbReference type="Gene3D" id="3.30.1370.30">
    <property type="match status" value="1"/>
</dbReference>
<dbReference type="Gene3D" id="3.30.1490.10">
    <property type="match status" value="1"/>
</dbReference>
<dbReference type="HAMAP" id="MF_01302_B">
    <property type="entry name" value="Ribosomal_uS8_B"/>
    <property type="match status" value="1"/>
</dbReference>
<dbReference type="InterPro" id="IPR000630">
    <property type="entry name" value="Ribosomal_uS8"/>
</dbReference>
<dbReference type="InterPro" id="IPR047863">
    <property type="entry name" value="Ribosomal_uS8_CS"/>
</dbReference>
<dbReference type="InterPro" id="IPR035987">
    <property type="entry name" value="Ribosomal_uS8_sf"/>
</dbReference>
<dbReference type="NCBIfam" id="NF001109">
    <property type="entry name" value="PRK00136.1"/>
    <property type="match status" value="1"/>
</dbReference>
<dbReference type="PANTHER" id="PTHR11758">
    <property type="entry name" value="40S RIBOSOMAL PROTEIN S15A"/>
    <property type="match status" value="1"/>
</dbReference>
<dbReference type="Pfam" id="PF00410">
    <property type="entry name" value="Ribosomal_S8"/>
    <property type="match status" value="1"/>
</dbReference>
<dbReference type="SUPFAM" id="SSF56047">
    <property type="entry name" value="Ribosomal protein S8"/>
    <property type="match status" value="1"/>
</dbReference>
<dbReference type="PROSITE" id="PS00053">
    <property type="entry name" value="RIBOSOMAL_S8"/>
    <property type="match status" value="1"/>
</dbReference>
<reference key="1">
    <citation type="journal article" date="2007" name="PLoS ONE">
        <title>The complete genome sequence and analysis of the Epsilonproteobacterium Arcobacter butzleri.</title>
        <authorList>
            <person name="Miller W.G."/>
            <person name="Parker C.T."/>
            <person name="Rubenfield M."/>
            <person name="Mendz G.L."/>
            <person name="Woesten M.M.S.M."/>
            <person name="Ussery D.W."/>
            <person name="Stolz J.F."/>
            <person name="Binnewies T.T."/>
            <person name="Hallin P.F."/>
            <person name="Wang G."/>
            <person name="Malek J.A."/>
            <person name="Rogosin A."/>
            <person name="Stanker L.H."/>
            <person name="Mandrell R.E."/>
        </authorList>
    </citation>
    <scope>NUCLEOTIDE SEQUENCE [LARGE SCALE GENOMIC DNA]</scope>
    <source>
        <strain>RM4018</strain>
    </source>
</reference>
<accession>A8ESV7</accession>